<accession>P75046</accession>
<organism>
    <name type="scientific">Mycoplasma pneumoniae (strain ATCC 29342 / M129 / Subtype 1)</name>
    <name type="common">Mycoplasmoides pneumoniae</name>
    <dbReference type="NCBI Taxonomy" id="272634"/>
    <lineage>
        <taxon>Bacteria</taxon>
        <taxon>Bacillati</taxon>
        <taxon>Mycoplasmatota</taxon>
        <taxon>Mycoplasmoidales</taxon>
        <taxon>Mycoplasmoidaceae</taxon>
        <taxon>Mycoplasmoides</taxon>
    </lineage>
</organism>
<evidence type="ECO:0000255" key="1">
    <source>
        <dbReference type="HAMAP-Rule" id="MF_01877"/>
    </source>
</evidence>
<name>RSMI_MYCPN</name>
<gene>
    <name evidence="1" type="primary">rsmI</name>
    <name type="ordered locus">MPN_071</name>
    <name type="ORF">D09_orf276</name>
    <name type="ORF">MP084</name>
</gene>
<dbReference type="EC" id="2.1.1.198" evidence="1"/>
<dbReference type="EMBL" id="U00089">
    <property type="protein sequence ID" value="AAB95732.1"/>
    <property type="molecule type" value="Genomic_DNA"/>
</dbReference>
<dbReference type="PIR" id="S73410">
    <property type="entry name" value="S73410"/>
</dbReference>
<dbReference type="RefSeq" id="NP_109759.1">
    <property type="nucleotide sequence ID" value="NC_000912.1"/>
</dbReference>
<dbReference type="RefSeq" id="WP_010874428.1">
    <property type="nucleotide sequence ID" value="NZ_OU342337.1"/>
</dbReference>
<dbReference type="SMR" id="P75046"/>
<dbReference type="STRING" id="272634.MPN_071"/>
<dbReference type="EnsemblBacteria" id="AAB95732">
    <property type="protein sequence ID" value="AAB95732"/>
    <property type="gene ID" value="MPN_071"/>
</dbReference>
<dbReference type="KEGG" id="mpn:MPN_071"/>
<dbReference type="PATRIC" id="fig|272634.6.peg.72"/>
<dbReference type="HOGENOM" id="CLU_044779_4_0_14"/>
<dbReference type="OrthoDB" id="9809084at2"/>
<dbReference type="BioCyc" id="MPNE272634:G1GJ3-109-MONOMER"/>
<dbReference type="Proteomes" id="UP000000808">
    <property type="component" value="Chromosome"/>
</dbReference>
<dbReference type="GO" id="GO:0005737">
    <property type="term" value="C:cytoplasm"/>
    <property type="evidence" value="ECO:0007669"/>
    <property type="project" value="UniProtKB-SubCell"/>
</dbReference>
<dbReference type="GO" id="GO:0070677">
    <property type="term" value="F:rRNA (cytosine-2'-O-)-methyltransferase activity"/>
    <property type="evidence" value="ECO:0007669"/>
    <property type="project" value="UniProtKB-UniRule"/>
</dbReference>
<dbReference type="CDD" id="cd11648">
    <property type="entry name" value="RsmI"/>
    <property type="match status" value="1"/>
</dbReference>
<dbReference type="Gene3D" id="3.40.1010.10">
    <property type="entry name" value="Cobalt-precorrin-4 Transmethylase, Domain 1"/>
    <property type="match status" value="1"/>
</dbReference>
<dbReference type="Gene3D" id="3.30.950.10">
    <property type="entry name" value="Methyltransferase, Cobalt-precorrin-4 Transmethylase, Domain 2"/>
    <property type="match status" value="1"/>
</dbReference>
<dbReference type="HAMAP" id="MF_01877">
    <property type="entry name" value="16SrRNA_methyltr_I"/>
    <property type="match status" value="1"/>
</dbReference>
<dbReference type="InterPro" id="IPR000878">
    <property type="entry name" value="4pyrrol_Mease"/>
</dbReference>
<dbReference type="InterPro" id="IPR035996">
    <property type="entry name" value="4pyrrol_Methylase_sf"/>
</dbReference>
<dbReference type="InterPro" id="IPR014777">
    <property type="entry name" value="4pyrrole_Mease_sub1"/>
</dbReference>
<dbReference type="InterPro" id="IPR014776">
    <property type="entry name" value="4pyrrole_Mease_sub2"/>
</dbReference>
<dbReference type="InterPro" id="IPR008189">
    <property type="entry name" value="rRNA_ssu_MeTfrase_I"/>
</dbReference>
<dbReference type="InterPro" id="IPR018063">
    <property type="entry name" value="SAM_MeTrfase_RsmI_CS"/>
</dbReference>
<dbReference type="NCBIfam" id="TIGR00096">
    <property type="entry name" value="16S rRNA (cytidine(1402)-2'-O)-methyltransferase"/>
    <property type="match status" value="1"/>
</dbReference>
<dbReference type="PANTHER" id="PTHR46111">
    <property type="entry name" value="RIBOSOMAL RNA SMALL SUBUNIT METHYLTRANSFERASE I"/>
    <property type="match status" value="1"/>
</dbReference>
<dbReference type="PANTHER" id="PTHR46111:SF1">
    <property type="entry name" value="RIBOSOMAL RNA SMALL SUBUNIT METHYLTRANSFERASE I"/>
    <property type="match status" value="1"/>
</dbReference>
<dbReference type="Pfam" id="PF00590">
    <property type="entry name" value="TP_methylase"/>
    <property type="match status" value="1"/>
</dbReference>
<dbReference type="PIRSF" id="PIRSF005917">
    <property type="entry name" value="MTase_YraL"/>
    <property type="match status" value="1"/>
</dbReference>
<dbReference type="SUPFAM" id="SSF53790">
    <property type="entry name" value="Tetrapyrrole methylase"/>
    <property type="match status" value="1"/>
</dbReference>
<dbReference type="PROSITE" id="PS01296">
    <property type="entry name" value="RSMI"/>
    <property type="match status" value="1"/>
</dbReference>
<protein>
    <recommendedName>
        <fullName evidence="1">Ribosomal RNA small subunit methyltransferase I</fullName>
        <ecNumber evidence="1">2.1.1.198</ecNumber>
    </recommendedName>
    <alternativeName>
        <fullName evidence="1">16S rRNA 2'-O-ribose C1402 methyltransferase</fullName>
    </alternativeName>
    <alternativeName>
        <fullName evidence="1">rRNA (cytidine-2'-O-)-methyltransferase RsmI</fullName>
    </alternativeName>
</protein>
<sequence>MPALKVIATPIGNIEEVSPRVKAALTKCEVLFCEDTRVTKKLLGLLGIDFSNKQFIINNEFKEKQNLSKVANLIHQYHCGLVSDAGYPSVSDPGHILVEYVRTQLPQIAIEVINGPSALVCGLVTSGFPESPLLFLGFLDHKPTQVTQTLKHYQNFQGTIVLFEAVHRLQQTLEVIQTVFSNTEVFVGRELTKLHESHYWFNTSAPLPDITLKGEFVIVINNHHTQPVGQYSDQLLKQEITQLVQMGVKVKDACHYLAKRLQLKSNKLYTLFHESD</sequence>
<comment type="function">
    <text evidence="1">Catalyzes the 2'-O-methylation of the ribose of cytidine 1402 (C1402) in 16S rRNA.</text>
</comment>
<comment type="catalytic activity">
    <reaction evidence="1">
        <text>cytidine(1402) in 16S rRNA + S-adenosyl-L-methionine = 2'-O-methylcytidine(1402) in 16S rRNA + S-adenosyl-L-homocysteine + H(+)</text>
        <dbReference type="Rhea" id="RHEA:42924"/>
        <dbReference type="Rhea" id="RHEA-COMP:10285"/>
        <dbReference type="Rhea" id="RHEA-COMP:10286"/>
        <dbReference type="ChEBI" id="CHEBI:15378"/>
        <dbReference type="ChEBI" id="CHEBI:57856"/>
        <dbReference type="ChEBI" id="CHEBI:59789"/>
        <dbReference type="ChEBI" id="CHEBI:74495"/>
        <dbReference type="ChEBI" id="CHEBI:82748"/>
        <dbReference type="EC" id="2.1.1.198"/>
    </reaction>
</comment>
<comment type="subcellular location">
    <subcellularLocation>
        <location evidence="1">Cytoplasm</location>
    </subcellularLocation>
</comment>
<comment type="similarity">
    <text evidence="1">Belongs to the methyltransferase superfamily. RsmI family.</text>
</comment>
<feature type="chain" id="PRO_0000211944" description="Ribosomal RNA small subunit methyltransferase I">
    <location>
        <begin position="1"/>
        <end position="276"/>
    </location>
</feature>
<keyword id="KW-0963">Cytoplasm</keyword>
<keyword id="KW-0489">Methyltransferase</keyword>
<keyword id="KW-1185">Reference proteome</keyword>
<keyword id="KW-0698">rRNA processing</keyword>
<keyword id="KW-0949">S-adenosyl-L-methionine</keyword>
<keyword id="KW-0808">Transferase</keyword>
<reference key="1">
    <citation type="journal article" date="1996" name="Nucleic Acids Res.">
        <title>Complete sequence analysis of the genome of the bacterium Mycoplasma pneumoniae.</title>
        <authorList>
            <person name="Himmelreich R."/>
            <person name="Hilbert H."/>
            <person name="Plagens H."/>
            <person name="Pirkl E."/>
            <person name="Li B.-C."/>
            <person name="Herrmann R."/>
        </authorList>
    </citation>
    <scope>NUCLEOTIDE SEQUENCE [LARGE SCALE GENOMIC DNA]</scope>
    <source>
        <strain>ATCC 29342 / M129 / Subtype 1</strain>
    </source>
</reference>
<proteinExistence type="inferred from homology"/>